<accession>Q7KW39</accession>
<accession>O46056</accession>
<accession>Q8T9I0</accession>
<accession>Q9V408</accession>
<reference evidence="10" key="1">
    <citation type="journal article" date="2000" name="Science">
        <title>The genome sequence of Drosophila melanogaster.</title>
        <authorList>
            <person name="Adams M.D."/>
            <person name="Celniker S.E."/>
            <person name="Holt R.A."/>
            <person name="Evans C.A."/>
            <person name="Gocayne J.D."/>
            <person name="Amanatides P.G."/>
            <person name="Scherer S.E."/>
            <person name="Li P.W."/>
            <person name="Hoskins R.A."/>
            <person name="Galle R.F."/>
            <person name="George R.A."/>
            <person name="Lewis S.E."/>
            <person name="Richards S."/>
            <person name="Ashburner M."/>
            <person name="Henderson S.N."/>
            <person name="Sutton G.G."/>
            <person name="Wortman J.R."/>
            <person name="Yandell M.D."/>
            <person name="Zhang Q."/>
            <person name="Chen L.X."/>
            <person name="Brandon R.C."/>
            <person name="Rogers Y.-H.C."/>
            <person name="Blazej R.G."/>
            <person name="Champe M."/>
            <person name="Pfeiffer B.D."/>
            <person name="Wan K.H."/>
            <person name="Doyle C."/>
            <person name="Baxter E.G."/>
            <person name="Helt G."/>
            <person name="Nelson C.R."/>
            <person name="Miklos G.L.G."/>
            <person name="Abril J.F."/>
            <person name="Agbayani A."/>
            <person name="An H.-J."/>
            <person name="Andrews-Pfannkoch C."/>
            <person name="Baldwin D."/>
            <person name="Ballew R.M."/>
            <person name="Basu A."/>
            <person name="Baxendale J."/>
            <person name="Bayraktaroglu L."/>
            <person name="Beasley E.M."/>
            <person name="Beeson K.Y."/>
            <person name="Benos P.V."/>
            <person name="Berman B.P."/>
            <person name="Bhandari D."/>
            <person name="Bolshakov S."/>
            <person name="Borkova D."/>
            <person name="Botchan M.R."/>
            <person name="Bouck J."/>
            <person name="Brokstein P."/>
            <person name="Brottier P."/>
            <person name="Burtis K.C."/>
            <person name="Busam D.A."/>
            <person name="Butler H."/>
            <person name="Cadieu E."/>
            <person name="Center A."/>
            <person name="Chandra I."/>
            <person name="Cherry J.M."/>
            <person name="Cawley S."/>
            <person name="Dahlke C."/>
            <person name="Davenport L.B."/>
            <person name="Davies P."/>
            <person name="de Pablos B."/>
            <person name="Delcher A."/>
            <person name="Deng Z."/>
            <person name="Mays A.D."/>
            <person name="Dew I."/>
            <person name="Dietz S.M."/>
            <person name="Dodson K."/>
            <person name="Doup L.E."/>
            <person name="Downes M."/>
            <person name="Dugan-Rocha S."/>
            <person name="Dunkov B.C."/>
            <person name="Dunn P."/>
            <person name="Durbin K.J."/>
            <person name="Evangelista C.C."/>
            <person name="Ferraz C."/>
            <person name="Ferriera S."/>
            <person name="Fleischmann W."/>
            <person name="Fosler C."/>
            <person name="Gabrielian A.E."/>
            <person name="Garg N.S."/>
            <person name="Gelbart W.M."/>
            <person name="Glasser K."/>
            <person name="Glodek A."/>
            <person name="Gong F."/>
            <person name="Gorrell J.H."/>
            <person name="Gu Z."/>
            <person name="Guan P."/>
            <person name="Harris M."/>
            <person name="Harris N.L."/>
            <person name="Harvey D.A."/>
            <person name="Heiman T.J."/>
            <person name="Hernandez J.R."/>
            <person name="Houck J."/>
            <person name="Hostin D."/>
            <person name="Houston K.A."/>
            <person name="Howland T.J."/>
            <person name="Wei M.-H."/>
            <person name="Ibegwam C."/>
            <person name="Jalali M."/>
            <person name="Kalush F."/>
            <person name="Karpen G.H."/>
            <person name="Ke Z."/>
            <person name="Kennison J.A."/>
            <person name="Ketchum K.A."/>
            <person name="Kimmel B.E."/>
            <person name="Kodira C.D."/>
            <person name="Kraft C.L."/>
            <person name="Kravitz S."/>
            <person name="Kulp D."/>
            <person name="Lai Z."/>
            <person name="Lasko P."/>
            <person name="Lei Y."/>
            <person name="Levitsky A.A."/>
            <person name="Li J.H."/>
            <person name="Li Z."/>
            <person name="Liang Y."/>
            <person name="Lin X."/>
            <person name="Liu X."/>
            <person name="Mattei B."/>
            <person name="McIntosh T.C."/>
            <person name="McLeod M.P."/>
            <person name="McPherson D."/>
            <person name="Merkulov G."/>
            <person name="Milshina N.V."/>
            <person name="Mobarry C."/>
            <person name="Morris J."/>
            <person name="Moshrefi A."/>
            <person name="Mount S.M."/>
            <person name="Moy M."/>
            <person name="Murphy B."/>
            <person name="Murphy L."/>
            <person name="Muzny D.M."/>
            <person name="Nelson D.L."/>
            <person name="Nelson D.R."/>
            <person name="Nelson K.A."/>
            <person name="Nixon K."/>
            <person name="Nusskern D.R."/>
            <person name="Pacleb J.M."/>
            <person name="Palazzolo M."/>
            <person name="Pittman G.S."/>
            <person name="Pan S."/>
            <person name="Pollard J."/>
            <person name="Puri V."/>
            <person name="Reese M.G."/>
            <person name="Reinert K."/>
            <person name="Remington K."/>
            <person name="Saunders R.D.C."/>
            <person name="Scheeler F."/>
            <person name="Shen H."/>
            <person name="Shue B.C."/>
            <person name="Siden-Kiamos I."/>
            <person name="Simpson M."/>
            <person name="Skupski M.P."/>
            <person name="Smith T.J."/>
            <person name="Spier E."/>
            <person name="Spradling A.C."/>
            <person name="Stapleton M."/>
            <person name="Strong R."/>
            <person name="Sun E."/>
            <person name="Svirskas R."/>
            <person name="Tector C."/>
            <person name="Turner R."/>
            <person name="Venter E."/>
            <person name="Wang A.H."/>
            <person name="Wang X."/>
            <person name="Wang Z.-Y."/>
            <person name="Wassarman D.A."/>
            <person name="Weinstock G.M."/>
            <person name="Weissenbach J."/>
            <person name="Williams S.M."/>
            <person name="Woodage T."/>
            <person name="Worley K.C."/>
            <person name="Wu D."/>
            <person name="Yang S."/>
            <person name="Yao Q.A."/>
            <person name="Ye J."/>
            <person name="Yeh R.-F."/>
            <person name="Zaveri J.S."/>
            <person name="Zhan M."/>
            <person name="Zhang G."/>
            <person name="Zhao Q."/>
            <person name="Zheng L."/>
            <person name="Zheng X.H."/>
            <person name="Zhong F.N."/>
            <person name="Zhong W."/>
            <person name="Zhou X."/>
            <person name="Zhu S.C."/>
            <person name="Zhu X."/>
            <person name="Smith H.O."/>
            <person name="Gibbs R.A."/>
            <person name="Myers E.W."/>
            <person name="Rubin G.M."/>
            <person name="Venter J.C."/>
        </authorList>
    </citation>
    <scope>NUCLEOTIDE SEQUENCE [LARGE SCALE GENOMIC DNA]</scope>
    <source>
        <strain evidence="6">Berkeley</strain>
    </source>
</reference>
<reference evidence="9 10" key="2">
    <citation type="journal article" date="2002" name="Genome Biol.">
        <title>Annotation of the Drosophila melanogaster euchromatic genome: a systematic review.</title>
        <authorList>
            <person name="Misra S."/>
            <person name="Crosby M.A."/>
            <person name="Mungall C.J."/>
            <person name="Matthews B.B."/>
            <person name="Campbell K.S."/>
            <person name="Hradecky P."/>
            <person name="Huang Y."/>
            <person name="Kaminker J.S."/>
            <person name="Millburn G.H."/>
            <person name="Prochnik S.E."/>
            <person name="Smith C.D."/>
            <person name="Tupy J.L."/>
            <person name="Whitfield E.J."/>
            <person name="Bayraktaroglu L."/>
            <person name="Berman B.P."/>
            <person name="Bettencourt B.R."/>
            <person name="Celniker S.E."/>
            <person name="de Grey A.D.N.J."/>
            <person name="Drysdale R.A."/>
            <person name="Harris N.L."/>
            <person name="Richter J."/>
            <person name="Russo S."/>
            <person name="Schroeder A.J."/>
            <person name="Shu S.Q."/>
            <person name="Stapleton M."/>
            <person name="Yamada C."/>
            <person name="Ashburner M."/>
            <person name="Gelbart W.M."/>
            <person name="Rubin G.M."/>
            <person name="Lewis S.E."/>
        </authorList>
    </citation>
    <scope>GENOME REANNOTATION</scope>
    <scope>ALTERNATIVE SPLICING</scope>
    <source>
        <strain>Berkeley</strain>
    </source>
</reference>
<reference evidence="9 11" key="3">
    <citation type="journal article" date="2000" name="Science">
        <title>From sequence to chromosome: the tip of the X chromosome of D. melanogaster.</title>
        <authorList>
            <person name="Benos P.V."/>
            <person name="Gatt M.K."/>
            <person name="Ashburner M."/>
            <person name="Murphy L."/>
            <person name="Harris D."/>
            <person name="Barrell B.G."/>
            <person name="Ferraz C."/>
            <person name="Vidal S."/>
            <person name="Brun C."/>
            <person name="Demailles J."/>
            <person name="Cadieu E."/>
            <person name="Dreano S."/>
            <person name="Gloux S."/>
            <person name="Lelaure V."/>
            <person name="Mottier S."/>
            <person name="Galibert F."/>
            <person name="Borkova D."/>
            <person name="Minana B."/>
            <person name="Kafatos F.C."/>
            <person name="Louis C."/>
            <person name="Siden-Kiamos I."/>
            <person name="Bolshakov S."/>
            <person name="Papagiannakis G."/>
            <person name="Spanos L."/>
            <person name="Cox S."/>
            <person name="Madueno E."/>
            <person name="de Pablos B."/>
            <person name="Modolell J."/>
            <person name="Peter A."/>
            <person name="Schoettler P."/>
            <person name="Werner M."/>
            <person name="Mourkioti F."/>
            <person name="Beinert N."/>
            <person name="Dowe G."/>
            <person name="Schaefer U."/>
            <person name="Jaeckle H."/>
            <person name="Bucheton A."/>
            <person name="Callister D.M."/>
            <person name="Campbell L.A."/>
            <person name="Darlamitsou A."/>
            <person name="Henderson N.S."/>
            <person name="McMillan P.J."/>
            <person name="Salles C."/>
            <person name="Tait E.A."/>
            <person name="Valenti P."/>
            <person name="Saunders R.D.C."/>
            <person name="Glover D.M."/>
        </authorList>
    </citation>
    <scope>NUCLEOTIDE SEQUENCE [LARGE SCALE GENOMIC DNA]</scope>
    <scope>ALTERNATIVE SPLICING</scope>
    <source>
        <strain evidence="7">Oregon-R</strain>
    </source>
</reference>
<reference key="4">
    <citation type="submission" date="2003-12" db="EMBL/GenBank/DDBJ databases">
        <authorList>
            <person name="Stapleton M."/>
            <person name="Brokstein P."/>
            <person name="Hong L."/>
            <person name="Agbayani A."/>
            <person name="Carlson J.W."/>
            <person name="Champe M."/>
            <person name="Chavez C."/>
            <person name="Dorsett V."/>
            <person name="Dresnek D."/>
            <person name="Farfan D."/>
            <person name="Frise E."/>
            <person name="George R.A."/>
            <person name="Gonzalez M."/>
            <person name="Guarin H."/>
            <person name="Kronmiller B."/>
            <person name="Li P.W."/>
            <person name="Liao G."/>
            <person name="Miranda A."/>
            <person name="Mungall C.J."/>
            <person name="Nunoo J."/>
            <person name="Pacleb J.M."/>
            <person name="Paragas V."/>
            <person name="Park S."/>
            <person name="Patel S."/>
            <person name="Phouanenavong S."/>
            <person name="Wan K.H."/>
            <person name="Yu C."/>
            <person name="Lewis S.E."/>
            <person name="Rubin G.M."/>
            <person name="Celniker S.E."/>
        </authorList>
    </citation>
    <scope>NUCLEOTIDE SEQUENCE [LARGE SCALE MRNA] OF 332-520</scope>
    <source>
        <strain>Berkeley</strain>
        <tissue>Ovary</tissue>
    </source>
</reference>
<evidence type="ECO:0000250" key="1">
    <source>
        <dbReference type="UniProtKB" id="P42412"/>
    </source>
</evidence>
<evidence type="ECO:0000250" key="2">
    <source>
        <dbReference type="UniProtKB" id="Q02252"/>
    </source>
</evidence>
<evidence type="ECO:0000250" key="3">
    <source>
        <dbReference type="UniProtKB" id="Q02253"/>
    </source>
</evidence>
<evidence type="ECO:0000255" key="4"/>
<evidence type="ECO:0000255" key="5">
    <source>
        <dbReference type="PROSITE-ProRule" id="PRU10008"/>
    </source>
</evidence>
<evidence type="ECO:0000269" key="6">
    <source>
    </source>
</evidence>
<evidence type="ECO:0000269" key="7">
    <source>
    </source>
</evidence>
<evidence type="ECO:0000303" key="8">
    <source>
    </source>
</evidence>
<evidence type="ECO:0000305" key="9"/>
<evidence type="ECO:0000312" key="10">
    <source>
        <dbReference type="EMBL" id="AAF45510.2"/>
    </source>
</evidence>
<evidence type="ECO:0000312" key="11">
    <source>
        <dbReference type="EMBL" id="CAA15632.1"/>
    </source>
</evidence>
<gene>
    <name type="ORF">CG17896</name>
</gene>
<proteinExistence type="evidence at transcript level"/>
<name>MMSA_DROME</name>
<protein>
    <recommendedName>
        <fullName evidence="3">Probable methylmalonate-semialdehyde/malonate-semialdehyde dehydrogenase [acylating], mitochondrial</fullName>
        <shortName evidence="3">MMSDH</shortName>
        <ecNumber evidence="3">1.2.1.27</ecNumber>
    </recommendedName>
    <alternativeName>
        <fullName evidence="3">Malonate-semialdehyde dehydrogenase [acylating]</fullName>
    </alternativeName>
</protein>
<keyword id="KW-0025">Alternative splicing</keyword>
<keyword id="KW-0496">Mitochondrion</keyword>
<keyword id="KW-0520">NAD</keyword>
<keyword id="KW-0560">Oxidoreductase</keyword>
<keyword id="KW-1185">Reference proteome</keyword>
<keyword id="KW-0809">Transit peptide</keyword>
<sequence>MSLVRLIGAEARHLAKRSYSSAAPTTKLFIDGKFVESKTNEWIDVHDPATNQVVTRVPKATQAEMQAALESNKKAFRSWSNQSILTRQQVMFKLQALIKENMGELAKNITKEQGKTLADAEGDVLRGLQVVEHCCSIPSLQMGETVANVARDMDTYSLVLPLGVTAGVAPFNFPAMIPLWMFPVAITTGNTMLLKPSERVPGATMLLMELLNEAGCPPGVVNVIHGQHDAVNFICDAPEIKAVSFVGSDQAGKYIYERAGKNGKRVQSNMGAKNHGIILGDANKENTLNQLAGAAFGAAGQRCMALSTAVFVGDAQAWIPDLVERAQKLKVNAGHVPGTDVGPVISAASRQRINDLIESGVKEGAKLILDGRKITVPGYEDGYFVGPTILSDVTPSMKCYTEEIFGPVLVILKADTLDDAIGIVNANPYGNGTAVFTTNGAAARKFVNEIDAGQVGVNVPIPVPLPMFSFTGTRGSFRGDHHFYGKQGIKFYTQTKTVTQLWRKTDVTHTQAAVAMPTMK</sequence>
<dbReference type="EC" id="1.2.1.27" evidence="3"/>
<dbReference type="EMBL" id="AE014298">
    <property type="protein sequence ID" value="AAF45510.2"/>
    <property type="molecule type" value="Genomic_DNA"/>
</dbReference>
<dbReference type="EMBL" id="AE014298">
    <property type="protein sequence ID" value="AAF45511.1"/>
    <property type="molecule type" value="Genomic_DNA"/>
</dbReference>
<dbReference type="EMBL" id="AL009147">
    <property type="protein sequence ID" value="CAA15632.1"/>
    <property type="status" value="ALT_SEQ"/>
    <property type="molecule type" value="Genomic_DNA"/>
</dbReference>
<dbReference type="EMBL" id="AL009147">
    <property type="protein sequence ID" value="CAB41309.1"/>
    <property type="molecule type" value="Genomic_DNA"/>
</dbReference>
<dbReference type="EMBL" id="AY069284">
    <property type="protein sequence ID" value="AAL39429.2"/>
    <property type="molecule type" value="mRNA"/>
</dbReference>
<dbReference type="PIR" id="T13418">
    <property type="entry name" value="T13418"/>
</dbReference>
<dbReference type="RefSeq" id="NP_569845.2">
    <molecule id="Q7KW39-1"/>
    <property type="nucleotide sequence ID" value="NM_130489.3"/>
</dbReference>
<dbReference type="RefSeq" id="NP_726672.1">
    <molecule id="Q7KW39-2"/>
    <property type="nucleotide sequence ID" value="NM_166844.1"/>
</dbReference>
<dbReference type="SMR" id="Q7KW39"/>
<dbReference type="BioGRID" id="57566">
    <property type="interactions" value="6"/>
</dbReference>
<dbReference type="FunCoup" id="Q7KW39">
    <property type="interactions" value="1296"/>
</dbReference>
<dbReference type="IntAct" id="Q7KW39">
    <property type="interactions" value="2"/>
</dbReference>
<dbReference type="STRING" id="7227.FBpp0070087"/>
<dbReference type="MEROPS" id="M14.A20"/>
<dbReference type="PaxDb" id="7227-FBpp0070087"/>
<dbReference type="DNASU" id="30995"/>
<dbReference type="EnsemblMetazoa" id="FBtr0070092">
    <molecule id="Q7KW39-1"/>
    <property type="protein sequence ID" value="FBpp0070087"/>
    <property type="gene ID" value="FBgn0023537"/>
</dbReference>
<dbReference type="EnsemblMetazoa" id="FBtr0070093">
    <molecule id="Q7KW39-2"/>
    <property type="protein sequence ID" value="FBpp0070088"/>
    <property type="gene ID" value="FBgn0023537"/>
</dbReference>
<dbReference type="GeneID" id="30995"/>
<dbReference type="KEGG" id="dme:Dmel_CG17896"/>
<dbReference type="UCSC" id="CG17896-RA">
    <molecule id="Q7KW39-1"/>
    <property type="organism name" value="d. melanogaster"/>
</dbReference>
<dbReference type="AGR" id="FB:FBgn0023537"/>
<dbReference type="FlyBase" id="FBgn0023537">
    <property type="gene designation" value="CG17896"/>
</dbReference>
<dbReference type="VEuPathDB" id="VectorBase:FBgn0023537"/>
<dbReference type="eggNOG" id="KOG2449">
    <property type="taxonomic scope" value="Eukaryota"/>
</dbReference>
<dbReference type="GeneTree" id="ENSGT00940000156110"/>
<dbReference type="InParanoid" id="Q7KW39"/>
<dbReference type="OMA" id="GGAKNHI"/>
<dbReference type="OrthoDB" id="310895at2759"/>
<dbReference type="PhylomeDB" id="Q7KW39"/>
<dbReference type="Reactome" id="R-DME-70895">
    <property type="pathway name" value="Branched-chain amino acid catabolism"/>
</dbReference>
<dbReference type="BioGRID-ORCS" id="30995">
    <property type="hits" value="0 hits in 1 CRISPR screen"/>
</dbReference>
<dbReference type="ChiTaRS" id="CG17896">
    <property type="organism name" value="fly"/>
</dbReference>
<dbReference type="GenomeRNAi" id="30995"/>
<dbReference type="PRO" id="PR:Q7KW39"/>
<dbReference type="Proteomes" id="UP000000803">
    <property type="component" value="Chromosome X"/>
</dbReference>
<dbReference type="Bgee" id="FBgn0023537">
    <property type="expression patterns" value="Expressed in adult middle midgut class I enteroendocrine cell in adult midgut (Drosophila) and 198 other cell types or tissues"/>
</dbReference>
<dbReference type="ExpressionAtlas" id="Q7KW39">
    <property type="expression patterns" value="baseline and differential"/>
</dbReference>
<dbReference type="GO" id="GO:0005739">
    <property type="term" value="C:mitochondrion"/>
    <property type="evidence" value="ECO:0000250"/>
    <property type="project" value="FlyBase"/>
</dbReference>
<dbReference type="GO" id="GO:0018478">
    <property type="term" value="F:malonate-semialdehyde dehydrogenase (acetylating) activity"/>
    <property type="evidence" value="ECO:0007669"/>
    <property type="project" value="UniProtKB-EC"/>
</dbReference>
<dbReference type="GO" id="GO:0004491">
    <property type="term" value="F:methylmalonate-semialdehyde dehydrogenase (acylating, NAD) activity"/>
    <property type="evidence" value="ECO:0000250"/>
    <property type="project" value="UniProtKB"/>
</dbReference>
<dbReference type="GO" id="GO:0006206">
    <property type="term" value="P:pyrimidine nucleobase metabolic process"/>
    <property type="evidence" value="ECO:0000250"/>
    <property type="project" value="FlyBase"/>
</dbReference>
<dbReference type="GO" id="GO:0006210">
    <property type="term" value="P:thymine catabolic process"/>
    <property type="evidence" value="ECO:0000318"/>
    <property type="project" value="GO_Central"/>
</dbReference>
<dbReference type="GO" id="GO:0019859">
    <property type="term" value="P:thymine metabolic process"/>
    <property type="evidence" value="ECO:0000250"/>
    <property type="project" value="UniProtKB"/>
</dbReference>
<dbReference type="GO" id="GO:0006574">
    <property type="term" value="P:valine catabolic process"/>
    <property type="evidence" value="ECO:0000318"/>
    <property type="project" value="GO_Central"/>
</dbReference>
<dbReference type="GO" id="GO:0006573">
    <property type="term" value="P:valine metabolic process"/>
    <property type="evidence" value="ECO:0000250"/>
    <property type="project" value="UniProtKB"/>
</dbReference>
<dbReference type="CDD" id="cd07085">
    <property type="entry name" value="ALDH_F6_MMSDH"/>
    <property type="match status" value="1"/>
</dbReference>
<dbReference type="FunFam" id="3.40.309.10:FF:000002">
    <property type="entry name" value="Methylmalonate-semialdehyde dehydrogenase (Acylating)"/>
    <property type="match status" value="1"/>
</dbReference>
<dbReference type="FunFam" id="3.40.605.10:FF:000003">
    <property type="entry name" value="Methylmalonate-semialdehyde dehydrogenase [acylating]"/>
    <property type="match status" value="1"/>
</dbReference>
<dbReference type="Gene3D" id="3.40.605.10">
    <property type="entry name" value="Aldehyde Dehydrogenase, Chain A, domain 1"/>
    <property type="match status" value="1"/>
</dbReference>
<dbReference type="Gene3D" id="3.40.309.10">
    <property type="entry name" value="Aldehyde Dehydrogenase, Chain A, domain 2"/>
    <property type="match status" value="1"/>
</dbReference>
<dbReference type="InterPro" id="IPR016161">
    <property type="entry name" value="Ald_DH/histidinol_DH"/>
</dbReference>
<dbReference type="InterPro" id="IPR016163">
    <property type="entry name" value="Ald_DH_C"/>
</dbReference>
<dbReference type="InterPro" id="IPR016160">
    <property type="entry name" value="Ald_DH_CS_CYS"/>
</dbReference>
<dbReference type="InterPro" id="IPR016162">
    <property type="entry name" value="Ald_DH_N"/>
</dbReference>
<dbReference type="InterPro" id="IPR015590">
    <property type="entry name" value="Aldehyde_DH_dom"/>
</dbReference>
<dbReference type="InterPro" id="IPR010061">
    <property type="entry name" value="MeMal-semiAld_DH"/>
</dbReference>
<dbReference type="NCBIfam" id="TIGR01722">
    <property type="entry name" value="MMSDH"/>
    <property type="match status" value="1"/>
</dbReference>
<dbReference type="PANTHER" id="PTHR43866">
    <property type="entry name" value="MALONATE-SEMIALDEHYDE DEHYDROGENASE"/>
    <property type="match status" value="1"/>
</dbReference>
<dbReference type="PANTHER" id="PTHR43866:SF3">
    <property type="entry name" value="METHYLMALONATE-SEMIALDEHYDE DEHYDROGENASE [ACYLATING], MITOCHONDRIAL"/>
    <property type="match status" value="1"/>
</dbReference>
<dbReference type="Pfam" id="PF00171">
    <property type="entry name" value="Aldedh"/>
    <property type="match status" value="1"/>
</dbReference>
<dbReference type="SUPFAM" id="SSF53720">
    <property type="entry name" value="ALDH-like"/>
    <property type="match status" value="1"/>
</dbReference>
<dbReference type="PROSITE" id="PS00070">
    <property type="entry name" value="ALDEHYDE_DEHYDR_CYS"/>
    <property type="match status" value="1"/>
</dbReference>
<comment type="function">
    <text evidence="3">Probable malonate and methylmalonate semialdehyde dehydrogenase involved in the catabolism of valine, thymine, and compounds catabolized by way of beta-alanine, including uracil and cytidine.</text>
</comment>
<comment type="catalytic activity">
    <reaction evidence="3">
        <text>2-methyl-3-oxopropanoate + NAD(+) + CoA + H2O = propanoyl-CoA + hydrogencarbonate + NADH + H(+)</text>
        <dbReference type="Rhea" id="RHEA:20804"/>
        <dbReference type="ChEBI" id="CHEBI:15377"/>
        <dbReference type="ChEBI" id="CHEBI:15378"/>
        <dbReference type="ChEBI" id="CHEBI:17544"/>
        <dbReference type="ChEBI" id="CHEBI:57287"/>
        <dbReference type="ChEBI" id="CHEBI:57392"/>
        <dbReference type="ChEBI" id="CHEBI:57540"/>
        <dbReference type="ChEBI" id="CHEBI:57700"/>
        <dbReference type="ChEBI" id="CHEBI:57945"/>
        <dbReference type="EC" id="1.2.1.27"/>
    </reaction>
    <physiologicalReaction direction="left-to-right" evidence="3">
        <dbReference type="Rhea" id="RHEA:20805"/>
    </physiologicalReaction>
</comment>
<comment type="catalytic activity">
    <reaction evidence="3">
        <text>3-oxopropanoate + NAD(+) + CoA + H2O = hydrogencarbonate + acetyl-CoA + NADH + H(+)</text>
        <dbReference type="Rhea" id="RHEA:76615"/>
        <dbReference type="ChEBI" id="CHEBI:15377"/>
        <dbReference type="ChEBI" id="CHEBI:15378"/>
        <dbReference type="ChEBI" id="CHEBI:17544"/>
        <dbReference type="ChEBI" id="CHEBI:33190"/>
        <dbReference type="ChEBI" id="CHEBI:57287"/>
        <dbReference type="ChEBI" id="CHEBI:57288"/>
        <dbReference type="ChEBI" id="CHEBI:57540"/>
        <dbReference type="ChEBI" id="CHEBI:57945"/>
        <dbReference type="EC" id="1.2.1.27"/>
    </reaction>
    <physiologicalReaction direction="left-to-right" evidence="3">
        <dbReference type="Rhea" id="RHEA:76616"/>
    </physiologicalReaction>
</comment>
<comment type="subunit">
    <text evidence="3">Homotetramer.</text>
</comment>
<comment type="subcellular location">
    <subcellularLocation>
        <location evidence="3">Mitochondrion</location>
    </subcellularLocation>
</comment>
<comment type="alternative products">
    <event type="alternative splicing"/>
    <isoform>
        <id>Q7KW39-1</id>
        <name evidence="8">B</name>
        <sequence type="displayed"/>
    </isoform>
    <isoform>
        <id>Q7KW39-2</id>
        <name evidence="8">A</name>
        <sequence type="described" ref="VSP_051919"/>
    </isoform>
</comment>
<comment type="similarity">
    <text evidence="4">Belongs to the aldehyde dehydrogenase family.</text>
</comment>
<comment type="sequence caution" evidence="9">
    <conflict type="erroneous gene model prediction">
        <sequence resource="EMBL-CDS" id="CAA15632"/>
    </conflict>
</comment>
<organism>
    <name type="scientific">Drosophila melanogaster</name>
    <name type="common">Fruit fly</name>
    <dbReference type="NCBI Taxonomy" id="7227"/>
    <lineage>
        <taxon>Eukaryota</taxon>
        <taxon>Metazoa</taxon>
        <taxon>Ecdysozoa</taxon>
        <taxon>Arthropoda</taxon>
        <taxon>Hexapoda</taxon>
        <taxon>Insecta</taxon>
        <taxon>Pterygota</taxon>
        <taxon>Neoptera</taxon>
        <taxon>Endopterygota</taxon>
        <taxon>Diptera</taxon>
        <taxon>Brachycera</taxon>
        <taxon>Muscomorpha</taxon>
        <taxon>Ephydroidea</taxon>
        <taxon>Drosophilidae</taxon>
        <taxon>Drosophila</taxon>
        <taxon>Sophophora</taxon>
    </lineage>
</organism>
<feature type="transit peptide" description="Mitochondrion" evidence="4">
    <location>
        <begin position="1"/>
        <end status="unknown"/>
    </location>
</feature>
<feature type="chain" id="PRO_0000043373" description="Probable methylmalonate-semialdehyde/malonate-semialdehyde dehydrogenase [acylating], mitochondrial">
    <location>
        <begin status="unknown"/>
        <end position="520"/>
    </location>
</feature>
<feature type="active site" description="Nucleophile" evidence="2 5">
    <location>
        <position position="303"/>
    </location>
</feature>
<feature type="binding site" evidence="1">
    <location>
        <position position="169"/>
    </location>
    <ligand>
        <name>NAD(+)</name>
        <dbReference type="ChEBI" id="CHEBI:57540"/>
    </ligand>
</feature>
<feature type="binding site" evidence="1">
    <location>
        <position position="171"/>
    </location>
    <ligand>
        <name>NAD(+)</name>
        <dbReference type="ChEBI" id="CHEBI:57540"/>
    </ligand>
</feature>
<feature type="binding site" evidence="1">
    <location>
        <position position="195"/>
    </location>
    <ligand>
        <name>NAD(+)</name>
        <dbReference type="ChEBI" id="CHEBI:57540"/>
    </ligand>
</feature>
<feature type="binding site" evidence="1">
    <location>
        <position position="198"/>
    </location>
    <ligand>
        <name>NAD(+)</name>
        <dbReference type="ChEBI" id="CHEBI:57540"/>
    </ligand>
</feature>
<feature type="binding site" evidence="1">
    <location>
        <position position="199"/>
    </location>
    <ligand>
        <name>NAD(+)</name>
        <dbReference type="ChEBI" id="CHEBI:57540"/>
    </ligand>
</feature>
<feature type="binding site" evidence="1">
    <location>
        <position position="248"/>
    </location>
    <ligand>
        <name>NAD(+)</name>
        <dbReference type="ChEBI" id="CHEBI:57540"/>
    </ligand>
</feature>
<feature type="binding site" evidence="1">
    <location>
        <position position="403"/>
    </location>
    <ligand>
        <name>NAD(+)</name>
        <dbReference type="ChEBI" id="CHEBI:57540"/>
    </ligand>
</feature>
<feature type="splice variant" id="VSP_051919" description="In isoform A." evidence="8">
    <location>
        <begin position="2"/>
        <end position="10"/>
    </location>
</feature>